<sequence>MDNMDEIIKEAVIYKRLAHGIYGQLGGDHYAVQVTTISGKKFIIHSTPEHGTVITDVTLSNKWTLVERIKITNQKTVKKLFKEISGKTTIKFVNYVTSGTCIGTTQHIKHKLTK</sequence>
<feature type="chain" id="PRO_0000071355" description="Uncharacterized protein R800">
    <location>
        <begin position="1"/>
        <end position="114"/>
    </location>
</feature>
<organism>
    <name type="scientific">Acanthamoeba polyphaga mimivirus</name>
    <name type="common">APMV</name>
    <dbReference type="NCBI Taxonomy" id="212035"/>
    <lineage>
        <taxon>Viruses</taxon>
        <taxon>Varidnaviria</taxon>
        <taxon>Bamfordvirae</taxon>
        <taxon>Nucleocytoviricota</taxon>
        <taxon>Megaviricetes</taxon>
        <taxon>Imitervirales</taxon>
        <taxon>Mimiviridae</taxon>
        <taxon>Megamimivirinae</taxon>
        <taxon>Mimivirus</taxon>
        <taxon>Mimivirus bradfordmassiliense</taxon>
    </lineage>
</organism>
<keyword id="KW-1185">Reference proteome</keyword>
<organismHost>
    <name type="scientific">Acanthamoeba polyphaga</name>
    <name type="common">Amoeba</name>
    <dbReference type="NCBI Taxonomy" id="5757"/>
</organismHost>
<proteinExistence type="predicted"/>
<name>YR800_MIMIV</name>
<reference key="1">
    <citation type="journal article" date="2004" name="Science">
        <title>The 1.2-megabase genome sequence of Mimivirus.</title>
        <authorList>
            <person name="Raoult D."/>
            <person name="Audic S."/>
            <person name="Robert C."/>
            <person name="Abergel C."/>
            <person name="Renesto P."/>
            <person name="Ogata H."/>
            <person name="La Scola B."/>
            <person name="Susan M."/>
            <person name="Claverie J.-M."/>
        </authorList>
    </citation>
    <scope>NUCLEOTIDE SEQUENCE [LARGE SCALE GENOMIC DNA]</scope>
    <source>
        <strain>Rowbotham-Bradford</strain>
    </source>
</reference>
<dbReference type="EMBL" id="AY653733">
    <property type="protein sequence ID" value="AAV51060.1"/>
    <property type="molecule type" value="Genomic_DNA"/>
</dbReference>
<dbReference type="KEGG" id="vg:9925462"/>
<dbReference type="Proteomes" id="UP000001134">
    <property type="component" value="Genome"/>
</dbReference>
<accession>Q5UR62</accession>
<protein>
    <recommendedName>
        <fullName>Uncharacterized protein R800</fullName>
    </recommendedName>
</protein>
<gene>
    <name type="ordered locus">MIMI_R800</name>
</gene>